<comment type="catalytic activity">
    <reaction evidence="3">
        <text>O-phospho-L-tyrosyl-[protein] + H2O = L-tyrosyl-[protein] + phosphate</text>
        <dbReference type="Rhea" id="RHEA:10684"/>
        <dbReference type="Rhea" id="RHEA-COMP:10136"/>
        <dbReference type="Rhea" id="RHEA-COMP:20101"/>
        <dbReference type="ChEBI" id="CHEBI:15377"/>
        <dbReference type="ChEBI" id="CHEBI:43474"/>
        <dbReference type="ChEBI" id="CHEBI:46858"/>
        <dbReference type="ChEBI" id="CHEBI:61978"/>
        <dbReference type="EC" id="3.1.3.48"/>
    </reaction>
</comment>
<comment type="similarity">
    <text evidence="4">Belongs to the protein-tyrosine phosphatase family.</text>
</comment>
<evidence type="ECO:0000250" key="1"/>
<evidence type="ECO:0000255" key="2">
    <source>
        <dbReference type="PROSITE-ProRule" id="PRU00160"/>
    </source>
</evidence>
<evidence type="ECO:0000255" key="3">
    <source>
        <dbReference type="PROSITE-ProRule" id="PRU10044"/>
    </source>
</evidence>
<evidence type="ECO:0000305" key="4"/>
<reference key="1">
    <citation type="journal article" date="1991" name="Immunogenetics">
        <title>Protein tyrosine phosphatase domains from the protochordate Styela plicata.</title>
        <authorList>
            <person name="Matthews R.J."/>
            <person name="Flores E."/>
            <person name="Thomas M.L."/>
        </authorList>
    </citation>
    <scope>NUCLEOTIDE SEQUENCE [MRNA]</scope>
</reference>
<gene>
    <name type="primary">STY-20</name>
</gene>
<protein>
    <recommendedName>
        <fullName>Tyrosine-protein phosphatase 20</fullName>
        <ecNumber>3.1.3.48</ecNumber>
    </recommendedName>
</protein>
<name>PTP20_STYPL</name>
<organism>
    <name type="scientific">Styela plicata</name>
    <name type="common">Wrinkled sea squirt</name>
    <name type="synonym">Ascidia plicata</name>
    <dbReference type="NCBI Taxonomy" id="7726"/>
    <lineage>
        <taxon>Eukaryota</taxon>
        <taxon>Metazoa</taxon>
        <taxon>Chordata</taxon>
        <taxon>Tunicata</taxon>
        <taxon>Ascidiacea</taxon>
        <taxon>Stolidobranchia</taxon>
        <taxon>Styelidae</taxon>
        <taxon>Styela</taxon>
    </lineage>
</organism>
<sequence>WMMIVEQKCRVIVMLAKCFEAGKKKCQKYWPDSEETKTFGRVKVFNADEVKYCGFLRRRFHIESFDENDVCGRVFQYQYINWPDHSVPNTTSNLVRMHKYVIQCLEEIGGDAPMVV</sequence>
<feature type="chain" id="PRO_0000094908" description="Tyrosine-protein phosphatase 20">
    <location>
        <begin position="1" status="less than"/>
        <end position="116" status="greater than"/>
    </location>
</feature>
<feature type="domain" description="Tyrosine-protein phosphatase" evidence="2">
    <location>
        <begin position="1" status="less than"/>
        <end position="116" status="greater than"/>
    </location>
</feature>
<feature type="binding site" evidence="1">
    <location>
        <position position="84"/>
    </location>
    <ligand>
        <name>substrate</name>
    </ligand>
</feature>
<feature type="non-terminal residue">
    <location>
        <position position="1"/>
    </location>
</feature>
<feature type="non-terminal residue">
    <location>
        <position position="116"/>
    </location>
</feature>
<keyword id="KW-0378">Hydrolase</keyword>
<keyword id="KW-0904">Protein phosphatase</keyword>
<dbReference type="EC" id="3.1.3.48"/>
<dbReference type="EMBL" id="M38005">
    <property type="protein sequence ID" value="AAA29838.1"/>
    <property type="molecule type" value="mRNA"/>
</dbReference>
<dbReference type="SMR" id="P28212"/>
<dbReference type="GO" id="GO:0004725">
    <property type="term" value="F:protein tyrosine phosphatase activity"/>
    <property type="evidence" value="ECO:0007669"/>
    <property type="project" value="UniProtKB-EC"/>
</dbReference>
<dbReference type="CDD" id="cd00047">
    <property type="entry name" value="PTPc"/>
    <property type="match status" value="1"/>
</dbReference>
<dbReference type="Gene3D" id="3.90.190.10">
    <property type="entry name" value="Protein tyrosine phosphatase superfamily"/>
    <property type="match status" value="1"/>
</dbReference>
<dbReference type="InterPro" id="IPR029021">
    <property type="entry name" value="Prot-tyrosine_phosphatase-like"/>
</dbReference>
<dbReference type="InterPro" id="IPR050348">
    <property type="entry name" value="Protein-Tyr_Phosphatase"/>
</dbReference>
<dbReference type="InterPro" id="IPR000242">
    <property type="entry name" value="PTP_cat"/>
</dbReference>
<dbReference type="PANTHER" id="PTHR19134:SF562">
    <property type="entry name" value="PROTEIN-TYROSINE-PHOSPHATASE"/>
    <property type="match status" value="1"/>
</dbReference>
<dbReference type="PANTHER" id="PTHR19134">
    <property type="entry name" value="RECEPTOR-TYPE TYROSINE-PROTEIN PHOSPHATASE"/>
    <property type="match status" value="1"/>
</dbReference>
<dbReference type="Pfam" id="PF00102">
    <property type="entry name" value="Y_phosphatase"/>
    <property type="match status" value="1"/>
</dbReference>
<dbReference type="SUPFAM" id="SSF52799">
    <property type="entry name" value="(Phosphotyrosine protein) phosphatases II"/>
    <property type="match status" value="1"/>
</dbReference>
<dbReference type="PROSITE" id="PS50055">
    <property type="entry name" value="TYR_PHOSPHATASE_PTP"/>
    <property type="match status" value="1"/>
</dbReference>
<proteinExistence type="evidence at transcript level"/>
<accession>P28212</accession>